<comment type="catalytic activity">
    <reaction evidence="1">
        <text>N-(5-phospho-beta-D-ribosyl)anthranilate = 1-(2-carboxyphenylamino)-1-deoxy-D-ribulose 5-phosphate</text>
        <dbReference type="Rhea" id="RHEA:21540"/>
        <dbReference type="ChEBI" id="CHEBI:18277"/>
        <dbReference type="ChEBI" id="CHEBI:58613"/>
        <dbReference type="EC" id="5.3.1.24"/>
    </reaction>
</comment>
<comment type="pathway">
    <text evidence="1">Amino-acid biosynthesis; L-tryptophan biosynthesis; L-tryptophan from chorismate: step 3/5.</text>
</comment>
<comment type="similarity">
    <text evidence="1">Belongs to the TrpF family.</text>
</comment>
<proteinExistence type="inferred from homology"/>
<protein>
    <recommendedName>
        <fullName evidence="1">N-(5'-phosphoribosyl)anthranilate isomerase</fullName>
        <shortName evidence="1">PRAI</shortName>
        <ecNumber evidence="1">5.3.1.24</ecNumber>
    </recommendedName>
</protein>
<evidence type="ECO:0000255" key="1">
    <source>
        <dbReference type="HAMAP-Rule" id="MF_00135"/>
    </source>
</evidence>
<gene>
    <name evidence="1" type="primary">trpF</name>
    <name type="ordered locus">RBAM_020810</name>
</gene>
<sequence length="217" mass="24178">MKKPEVKYCGIRSKRDYELAAASGADYLGFIFAASKRRVTPGEVRKWKEKVLTDKKHVGVFVNETIENIAQIASDLALDVIQLHGDESPEDARRLRPLVRSEIWKALHHGEGTLRQMAQFAPAVDGYVIDSSVKGMRGGTGIAFSWARVPLYRKQAQNANKRCFIAGGVNPETITGLLRSRPCGIDLASGIEKNGQKDQTLIRLLEERMNHYVSISK</sequence>
<dbReference type="EC" id="5.3.1.24" evidence="1"/>
<dbReference type="EMBL" id="CP000560">
    <property type="protein sequence ID" value="ABS74443.1"/>
    <property type="molecule type" value="Genomic_DNA"/>
</dbReference>
<dbReference type="RefSeq" id="WP_012117858.1">
    <property type="nucleotide sequence ID" value="NC_009725.2"/>
</dbReference>
<dbReference type="SMR" id="A7Z617"/>
<dbReference type="GeneID" id="93081216"/>
<dbReference type="KEGG" id="bay:RBAM_020810"/>
<dbReference type="HOGENOM" id="CLU_076364_2_0_9"/>
<dbReference type="UniPathway" id="UPA00035">
    <property type="reaction ID" value="UER00042"/>
</dbReference>
<dbReference type="Proteomes" id="UP000001120">
    <property type="component" value="Chromosome"/>
</dbReference>
<dbReference type="GO" id="GO:0004640">
    <property type="term" value="F:phosphoribosylanthranilate isomerase activity"/>
    <property type="evidence" value="ECO:0007669"/>
    <property type="project" value="UniProtKB-UniRule"/>
</dbReference>
<dbReference type="GO" id="GO:0000162">
    <property type="term" value="P:L-tryptophan biosynthetic process"/>
    <property type="evidence" value="ECO:0007669"/>
    <property type="project" value="UniProtKB-UniRule"/>
</dbReference>
<dbReference type="CDD" id="cd00405">
    <property type="entry name" value="PRAI"/>
    <property type="match status" value="1"/>
</dbReference>
<dbReference type="Gene3D" id="3.20.20.70">
    <property type="entry name" value="Aldolase class I"/>
    <property type="match status" value="1"/>
</dbReference>
<dbReference type="HAMAP" id="MF_00135">
    <property type="entry name" value="PRAI"/>
    <property type="match status" value="1"/>
</dbReference>
<dbReference type="InterPro" id="IPR013785">
    <property type="entry name" value="Aldolase_TIM"/>
</dbReference>
<dbReference type="InterPro" id="IPR001240">
    <property type="entry name" value="PRAI_dom"/>
</dbReference>
<dbReference type="InterPro" id="IPR011060">
    <property type="entry name" value="RibuloseP-bd_barrel"/>
</dbReference>
<dbReference type="InterPro" id="IPR044643">
    <property type="entry name" value="TrpF_fam"/>
</dbReference>
<dbReference type="NCBIfam" id="NF002301">
    <property type="entry name" value="PRK01222.2-1"/>
    <property type="match status" value="1"/>
</dbReference>
<dbReference type="PANTHER" id="PTHR42894">
    <property type="entry name" value="N-(5'-PHOSPHORIBOSYL)ANTHRANILATE ISOMERASE"/>
    <property type="match status" value="1"/>
</dbReference>
<dbReference type="PANTHER" id="PTHR42894:SF1">
    <property type="entry name" value="N-(5'-PHOSPHORIBOSYL)ANTHRANILATE ISOMERASE"/>
    <property type="match status" value="1"/>
</dbReference>
<dbReference type="Pfam" id="PF00697">
    <property type="entry name" value="PRAI"/>
    <property type="match status" value="1"/>
</dbReference>
<dbReference type="SUPFAM" id="SSF51366">
    <property type="entry name" value="Ribulose-phoshate binding barrel"/>
    <property type="match status" value="1"/>
</dbReference>
<organism>
    <name type="scientific">Bacillus velezensis (strain DSM 23117 / BGSC 10A6 / LMG 26770 / FZB42)</name>
    <name type="common">Bacillus amyloliquefaciens subsp. plantarum</name>
    <dbReference type="NCBI Taxonomy" id="326423"/>
    <lineage>
        <taxon>Bacteria</taxon>
        <taxon>Bacillati</taxon>
        <taxon>Bacillota</taxon>
        <taxon>Bacilli</taxon>
        <taxon>Bacillales</taxon>
        <taxon>Bacillaceae</taxon>
        <taxon>Bacillus</taxon>
        <taxon>Bacillus amyloliquefaciens group</taxon>
    </lineage>
</organism>
<feature type="chain" id="PRO_1000018577" description="N-(5'-phosphoribosyl)anthranilate isomerase">
    <location>
        <begin position="1"/>
        <end position="217"/>
    </location>
</feature>
<accession>A7Z617</accession>
<name>TRPF_BACVZ</name>
<reference key="1">
    <citation type="journal article" date="2007" name="Nat. Biotechnol.">
        <title>Comparative analysis of the complete genome sequence of the plant growth-promoting bacterium Bacillus amyloliquefaciens FZB42.</title>
        <authorList>
            <person name="Chen X.H."/>
            <person name="Koumoutsi A."/>
            <person name="Scholz R."/>
            <person name="Eisenreich A."/>
            <person name="Schneider K."/>
            <person name="Heinemeyer I."/>
            <person name="Morgenstern B."/>
            <person name="Voss B."/>
            <person name="Hess W.R."/>
            <person name="Reva O."/>
            <person name="Junge H."/>
            <person name="Voigt B."/>
            <person name="Jungblut P.R."/>
            <person name="Vater J."/>
            <person name="Suessmuth R."/>
            <person name="Liesegang H."/>
            <person name="Strittmatter A."/>
            <person name="Gottschalk G."/>
            <person name="Borriss R."/>
        </authorList>
    </citation>
    <scope>NUCLEOTIDE SEQUENCE [LARGE SCALE GENOMIC DNA]</scope>
    <source>
        <strain>DSM 23117 / BGSC 10A6 / LMG 26770 / FZB42</strain>
    </source>
</reference>
<keyword id="KW-0028">Amino-acid biosynthesis</keyword>
<keyword id="KW-0057">Aromatic amino acid biosynthesis</keyword>
<keyword id="KW-0413">Isomerase</keyword>
<keyword id="KW-0822">Tryptophan biosynthesis</keyword>